<comment type="function">
    <text evidence="1">Catalyzes the conversion of 3-deoxy-D-arabino-heptulosonate 7-phosphate (DAHP) to dehydroquinate (DHQ).</text>
</comment>
<comment type="catalytic activity">
    <reaction evidence="1">
        <text>7-phospho-2-dehydro-3-deoxy-D-arabino-heptonate = 3-dehydroquinate + phosphate</text>
        <dbReference type="Rhea" id="RHEA:21968"/>
        <dbReference type="ChEBI" id="CHEBI:32364"/>
        <dbReference type="ChEBI" id="CHEBI:43474"/>
        <dbReference type="ChEBI" id="CHEBI:58394"/>
        <dbReference type="EC" id="4.2.3.4"/>
    </reaction>
</comment>
<comment type="cofactor">
    <cofactor evidence="1">
        <name>Co(2+)</name>
        <dbReference type="ChEBI" id="CHEBI:48828"/>
    </cofactor>
    <cofactor evidence="1">
        <name>Zn(2+)</name>
        <dbReference type="ChEBI" id="CHEBI:29105"/>
    </cofactor>
    <text evidence="1">Binds 1 divalent metal cation per subunit. Can use either Co(2+) or Zn(2+).</text>
</comment>
<comment type="cofactor">
    <cofactor evidence="1">
        <name>NAD(+)</name>
        <dbReference type="ChEBI" id="CHEBI:57540"/>
    </cofactor>
</comment>
<comment type="pathway">
    <text evidence="1">Metabolic intermediate biosynthesis; chorismate biosynthesis; chorismate from D-erythrose 4-phosphate and phosphoenolpyruvate: step 2/7.</text>
</comment>
<comment type="subcellular location">
    <subcellularLocation>
        <location evidence="1">Cytoplasm</location>
    </subcellularLocation>
</comment>
<comment type="similarity">
    <text evidence="1">Belongs to the sugar phosphate cyclases superfamily. Dehydroquinate synthase family.</text>
</comment>
<sequence>MERIVVTLGERSYPITIASGLFNEPASFLPLKSGEQVMLVTNETLAPLYLDKVRGVLEQAGVNVDSVILPDGEQYKSLAVLDTVFTALLQKPHGRDTTLVALGGGVVGDLTGFAAASYQRGVRFIQVPTTLLSQVDSSVGGKTAVNHPLGKNMIGAFYQPASVVVDLDCLKTLPPRELASGLAEVIKYGIILDGAFFNWLEENLDALLRLDGPAMAYCIRRCCELKAEVVAADERETGLRALLNLGHTFGHAIEAEMGYGNWLHGEAVAAGMVMAARTSERLGQFSSAETQRIITLLKRAGLPVNGPREMSAQAYLPHMLRDKKVLAGEIRLILPLAIGKSEVRSGVSHELVLNAIADCQSA</sequence>
<evidence type="ECO:0000255" key="1">
    <source>
        <dbReference type="HAMAP-Rule" id="MF_00110"/>
    </source>
</evidence>
<gene>
    <name evidence="1" type="primary">aroB</name>
    <name type="ordered locus">SBO_3376</name>
</gene>
<keyword id="KW-0028">Amino-acid biosynthesis</keyword>
<keyword id="KW-0057">Aromatic amino acid biosynthesis</keyword>
<keyword id="KW-0170">Cobalt</keyword>
<keyword id="KW-0963">Cytoplasm</keyword>
<keyword id="KW-0456">Lyase</keyword>
<keyword id="KW-0479">Metal-binding</keyword>
<keyword id="KW-0520">NAD</keyword>
<keyword id="KW-0547">Nucleotide-binding</keyword>
<keyword id="KW-0862">Zinc</keyword>
<accession>Q31VP5</accession>
<reference key="1">
    <citation type="journal article" date="2005" name="Nucleic Acids Res.">
        <title>Genome dynamics and diversity of Shigella species, the etiologic agents of bacillary dysentery.</title>
        <authorList>
            <person name="Yang F."/>
            <person name="Yang J."/>
            <person name="Zhang X."/>
            <person name="Chen L."/>
            <person name="Jiang Y."/>
            <person name="Yan Y."/>
            <person name="Tang X."/>
            <person name="Wang J."/>
            <person name="Xiong Z."/>
            <person name="Dong J."/>
            <person name="Xue Y."/>
            <person name="Zhu Y."/>
            <person name="Xu X."/>
            <person name="Sun L."/>
            <person name="Chen S."/>
            <person name="Nie H."/>
            <person name="Peng J."/>
            <person name="Xu J."/>
            <person name="Wang Y."/>
            <person name="Yuan Z."/>
            <person name="Wen Y."/>
            <person name="Yao Z."/>
            <person name="Shen Y."/>
            <person name="Qiang B."/>
            <person name="Hou Y."/>
            <person name="Yu J."/>
            <person name="Jin Q."/>
        </authorList>
    </citation>
    <scope>NUCLEOTIDE SEQUENCE [LARGE SCALE GENOMIC DNA]</scope>
    <source>
        <strain>Sb227</strain>
    </source>
</reference>
<proteinExistence type="inferred from homology"/>
<organism>
    <name type="scientific">Shigella boydii serotype 4 (strain Sb227)</name>
    <dbReference type="NCBI Taxonomy" id="300268"/>
    <lineage>
        <taxon>Bacteria</taxon>
        <taxon>Pseudomonadati</taxon>
        <taxon>Pseudomonadota</taxon>
        <taxon>Gammaproteobacteria</taxon>
        <taxon>Enterobacterales</taxon>
        <taxon>Enterobacteriaceae</taxon>
        <taxon>Shigella</taxon>
    </lineage>
</organism>
<name>AROB_SHIBS</name>
<protein>
    <recommendedName>
        <fullName evidence="1">3-dehydroquinate synthase</fullName>
        <shortName evidence="1">DHQS</shortName>
        <ecNumber evidence="1">4.2.3.4</ecNumber>
    </recommendedName>
</protein>
<feature type="chain" id="PRO_0000231125" description="3-dehydroquinate synthase">
    <location>
        <begin position="1"/>
        <end position="362"/>
    </location>
</feature>
<feature type="binding site" evidence="1">
    <location>
        <begin position="71"/>
        <end position="76"/>
    </location>
    <ligand>
        <name>NAD(+)</name>
        <dbReference type="ChEBI" id="CHEBI:57540"/>
    </ligand>
</feature>
<feature type="binding site" evidence="1">
    <location>
        <begin position="105"/>
        <end position="109"/>
    </location>
    <ligand>
        <name>NAD(+)</name>
        <dbReference type="ChEBI" id="CHEBI:57540"/>
    </ligand>
</feature>
<feature type="binding site" evidence="1">
    <location>
        <begin position="129"/>
        <end position="130"/>
    </location>
    <ligand>
        <name>NAD(+)</name>
        <dbReference type="ChEBI" id="CHEBI:57540"/>
    </ligand>
</feature>
<feature type="binding site" evidence="1">
    <location>
        <position position="142"/>
    </location>
    <ligand>
        <name>NAD(+)</name>
        <dbReference type="ChEBI" id="CHEBI:57540"/>
    </ligand>
</feature>
<feature type="binding site" evidence="1">
    <location>
        <position position="151"/>
    </location>
    <ligand>
        <name>NAD(+)</name>
        <dbReference type="ChEBI" id="CHEBI:57540"/>
    </ligand>
</feature>
<feature type="binding site" evidence="1">
    <location>
        <begin position="169"/>
        <end position="172"/>
    </location>
    <ligand>
        <name>NAD(+)</name>
        <dbReference type="ChEBI" id="CHEBI:57540"/>
    </ligand>
</feature>
<feature type="binding site" evidence="1">
    <location>
        <position position="184"/>
    </location>
    <ligand>
        <name>Zn(2+)</name>
        <dbReference type="ChEBI" id="CHEBI:29105"/>
    </ligand>
</feature>
<feature type="binding site" evidence="1">
    <location>
        <position position="247"/>
    </location>
    <ligand>
        <name>Zn(2+)</name>
        <dbReference type="ChEBI" id="CHEBI:29105"/>
    </ligand>
</feature>
<feature type="binding site" evidence="1">
    <location>
        <position position="264"/>
    </location>
    <ligand>
        <name>Zn(2+)</name>
        <dbReference type="ChEBI" id="CHEBI:29105"/>
    </ligand>
</feature>
<dbReference type="EC" id="4.2.3.4" evidence="1"/>
<dbReference type="EMBL" id="CP000036">
    <property type="protein sequence ID" value="ABB67863.1"/>
    <property type="molecule type" value="Genomic_DNA"/>
</dbReference>
<dbReference type="RefSeq" id="WP_000439846.1">
    <property type="nucleotide sequence ID" value="NC_007613.1"/>
</dbReference>
<dbReference type="SMR" id="Q31VP5"/>
<dbReference type="GeneID" id="93778609"/>
<dbReference type="KEGG" id="sbo:SBO_3376"/>
<dbReference type="HOGENOM" id="CLU_001201_0_2_6"/>
<dbReference type="UniPathway" id="UPA00053">
    <property type="reaction ID" value="UER00085"/>
</dbReference>
<dbReference type="Proteomes" id="UP000007067">
    <property type="component" value="Chromosome"/>
</dbReference>
<dbReference type="GO" id="GO:0005737">
    <property type="term" value="C:cytoplasm"/>
    <property type="evidence" value="ECO:0007669"/>
    <property type="project" value="UniProtKB-SubCell"/>
</dbReference>
<dbReference type="GO" id="GO:0003856">
    <property type="term" value="F:3-dehydroquinate synthase activity"/>
    <property type="evidence" value="ECO:0007669"/>
    <property type="project" value="UniProtKB-UniRule"/>
</dbReference>
<dbReference type="GO" id="GO:0046872">
    <property type="term" value="F:metal ion binding"/>
    <property type="evidence" value="ECO:0007669"/>
    <property type="project" value="UniProtKB-KW"/>
</dbReference>
<dbReference type="GO" id="GO:0000166">
    <property type="term" value="F:nucleotide binding"/>
    <property type="evidence" value="ECO:0007669"/>
    <property type="project" value="UniProtKB-KW"/>
</dbReference>
<dbReference type="GO" id="GO:0008652">
    <property type="term" value="P:amino acid biosynthetic process"/>
    <property type="evidence" value="ECO:0007669"/>
    <property type="project" value="UniProtKB-KW"/>
</dbReference>
<dbReference type="GO" id="GO:0009073">
    <property type="term" value="P:aromatic amino acid family biosynthetic process"/>
    <property type="evidence" value="ECO:0007669"/>
    <property type="project" value="UniProtKB-KW"/>
</dbReference>
<dbReference type="GO" id="GO:0009423">
    <property type="term" value="P:chorismate biosynthetic process"/>
    <property type="evidence" value="ECO:0007669"/>
    <property type="project" value="UniProtKB-UniRule"/>
</dbReference>
<dbReference type="CDD" id="cd08195">
    <property type="entry name" value="DHQS"/>
    <property type="match status" value="1"/>
</dbReference>
<dbReference type="FunFam" id="1.20.1090.10:FF:000002">
    <property type="entry name" value="3-dehydroquinate synthase"/>
    <property type="match status" value="1"/>
</dbReference>
<dbReference type="FunFam" id="3.40.50.1970:FF:000001">
    <property type="entry name" value="3-dehydroquinate synthase"/>
    <property type="match status" value="1"/>
</dbReference>
<dbReference type="Gene3D" id="3.40.50.1970">
    <property type="match status" value="1"/>
</dbReference>
<dbReference type="Gene3D" id="1.20.1090.10">
    <property type="entry name" value="Dehydroquinate synthase-like - alpha domain"/>
    <property type="match status" value="1"/>
</dbReference>
<dbReference type="HAMAP" id="MF_00110">
    <property type="entry name" value="DHQ_synthase"/>
    <property type="match status" value="1"/>
</dbReference>
<dbReference type="InterPro" id="IPR050071">
    <property type="entry name" value="Dehydroquinate_synthase"/>
</dbReference>
<dbReference type="InterPro" id="IPR016037">
    <property type="entry name" value="DHQ_synth_AroB"/>
</dbReference>
<dbReference type="InterPro" id="IPR030963">
    <property type="entry name" value="DHQ_synth_fam"/>
</dbReference>
<dbReference type="InterPro" id="IPR030960">
    <property type="entry name" value="DHQS/DOIS_N"/>
</dbReference>
<dbReference type="InterPro" id="IPR056179">
    <property type="entry name" value="DHQS_C"/>
</dbReference>
<dbReference type="NCBIfam" id="TIGR01357">
    <property type="entry name" value="aroB"/>
    <property type="match status" value="1"/>
</dbReference>
<dbReference type="PANTHER" id="PTHR43622">
    <property type="entry name" value="3-DEHYDROQUINATE SYNTHASE"/>
    <property type="match status" value="1"/>
</dbReference>
<dbReference type="PANTHER" id="PTHR43622:SF7">
    <property type="entry name" value="3-DEHYDROQUINATE SYNTHASE, CHLOROPLASTIC"/>
    <property type="match status" value="1"/>
</dbReference>
<dbReference type="Pfam" id="PF01761">
    <property type="entry name" value="DHQ_synthase"/>
    <property type="match status" value="1"/>
</dbReference>
<dbReference type="Pfam" id="PF24621">
    <property type="entry name" value="DHQS_C"/>
    <property type="match status" value="1"/>
</dbReference>
<dbReference type="PIRSF" id="PIRSF001455">
    <property type="entry name" value="DHQ_synth"/>
    <property type="match status" value="1"/>
</dbReference>
<dbReference type="SUPFAM" id="SSF56796">
    <property type="entry name" value="Dehydroquinate synthase-like"/>
    <property type="match status" value="1"/>
</dbReference>